<evidence type="ECO:0000250" key="1"/>
<evidence type="ECO:0000250" key="2">
    <source>
        <dbReference type="UniProtKB" id="Q8VHK2"/>
    </source>
</evidence>
<evidence type="ECO:0000250" key="3">
    <source>
        <dbReference type="UniProtKB" id="Q8WXD9"/>
    </source>
</evidence>
<evidence type="ECO:0000255" key="4">
    <source>
        <dbReference type="PROSITE-ProRule" id="PRU00184"/>
    </source>
</evidence>
<evidence type="ECO:0000255" key="5">
    <source>
        <dbReference type="PROSITE-ProRule" id="PRU00192"/>
    </source>
</evidence>
<evidence type="ECO:0000256" key="6">
    <source>
        <dbReference type="SAM" id="MobiDB-lite"/>
    </source>
</evidence>
<evidence type="ECO:0000303" key="7">
    <source>
    </source>
</evidence>
<evidence type="ECO:0000303" key="8">
    <source>
    </source>
</evidence>
<evidence type="ECO:0000303" key="9">
    <source>
    </source>
</evidence>
<evidence type="ECO:0000305" key="10"/>
<evidence type="ECO:0007744" key="11">
    <source>
    </source>
</evidence>
<evidence type="ECO:0007744" key="12">
    <source>
    </source>
</evidence>
<evidence type="ECO:0007744" key="13">
    <source>
    </source>
</evidence>
<sequence length="1431" mass="150495">MGKEQELVQAVKAEDVGTAQRLLQRPRPGKAKLLGSTKKINVNFQDPDGFSALHHAALNGNTELISLLLEAQAAVDIKDNKGMRPLHYAAWQGRKEPMKLVLKAGSAVNVPSDEGHIPLHLAAQHGHYDVSEMLLQHQSNPCMVDNSGKTPLDLACEFGRVGVVQLLLSSNMCAALLEPRPGDTTDPNGTSPLHLAAKNGHIDIIRLLLQAGIDINRQTKSGTALHEAALCGKTEVVRLLLDSGINAQVRNTYSQTALDIVHQFTTSQASKEIKQLLREASAALQVRATKDYCNNYDLTSLNVKAGDIITVLEQHPDGRWKGCIHDNRTGNDRVGYFPSSLGEAIVKRAGSRTGSEPSPPQGGGSLGPSAPPEEIWVLRKPFAGGDRSGSLSNVAGGRSTGGHALHAGSEGVKLLATVLSQKSVSESSPGDSPVKPPEGSSGAARSQPPAAHAGQVYGEQPPKKLESASASASEGKSAEAVSQWLATFQLQLYAPNFTSAGYDLPTISRMTPEDLTAIGVTKPGHRKKITAEISGLNIPDWLPEHKPANLAVWLSMIGLAQYYKVLVDNGYENIDFITDITWEDLQEIGITKLGHQKKLMLAVRKLAELQKAEYSKYEGGPLRRKTPQSLEMMAIESPPPSEPAAAECQSPKMTTFQDSELSGELQAALSGPAEAGAAAVEKSSNHLPPTPRTTSRESSLSGRARHISSSQELLGDGPPGPGSPMSRSQEYLLDEGMAPGTPPKEVRSSRHGHSVKRASVPPVPGKPRQVLPSGASHFTPPQTPTKAQPGSPQALGGPHGPATAKVKPTPQLLPPTDRPMSPRSLPQSPTHRGFAYVLPQPVEGEVGPPAPGPAPPPVPAAVPTLCLPPETDVEPGRPKKRAHSLNRYAASDSEPERDELLVPAAAGPYATVQRRVGRSHSVRAPAGTDKNVNRSQSFAVRPRKKGPPPPPPKRSSSAMASANLADEPAPDVEAEDGRLGVRAQRRRASDLAGSVDTGSAGSVKSIAAMLELSSIGGGGRAIRRPPEGHPTPRPASPEPGRVATVLASVKHKEAIGPDGEVVNRRRTLSGPVTGLLATARRGSGEPAEQSHFMEDGTARQRLRGPAKGEASAEGPPLARVEASATLKRRIRAKQSQQENVKFILTESDTVKRRPKAKEPDTGPEPPPPLSVYQNGTATVRRRPTSEQAGPPELPPPPPPAEPPPADLMQLPPLPLPDGNARKPVKPPVSPKPILSQPVSKIQGSPTPASKKVPLPGPGSPEVKRAHGTPPPVSPKPPPPPTAPKPAKALAGLQSSSATPSPVPSPARQPPAALIKPASSPPSQSASPVKPPSPGTPALHVPAKPPRAAASVVSGPPVASDCASPGDSARQKLEETSACLAAALQAVEEKIRQEDGQGPRPSSIEEKSTGSILEDIGSMFDDLADQLDAMLE</sequence>
<dbReference type="EMBL" id="AK014376">
    <property type="protein sequence ID" value="BAB29308.1"/>
    <property type="molecule type" value="mRNA"/>
</dbReference>
<dbReference type="EMBL" id="AK048449">
    <property type="protein sequence ID" value="BAC33340.1"/>
    <property type="molecule type" value="mRNA"/>
</dbReference>
<dbReference type="EMBL" id="AK049987">
    <property type="protein sequence ID" value="BAC34019.1"/>
    <property type="molecule type" value="mRNA"/>
</dbReference>
<dbReference type="EMBL" id="AK129327">
    <property type="protein sequence ID" value="BAC98137.1"/>
    <property type="molecule type" value="mRNA"/>
</dbReference>
<dbReference type="EMBL" id="BC060720">
    <property type="protein sequence ID" value="AAH60720.1"/>
    <property type="molecule type" value="mRNA"/>
</dbReference>
<dbReference type="CCDS" id="CCDS50013.1">
    <molecule id="Q6P9K8-1"/>
</dbReference>
<dbReference type="CCDS" id="CCDS89007.1">
    <molecule id="Q6P9K8-2"/>
</dbReference>
<dbReference type="RefSeq" id="NP_001347398.1">
    <molecule id="Q6P9K8-2"/>
    <property type="nucleotide sequence ID" value="NM_001360469.1"/>
</dbReference>
<dbReference type="RefSeq" id="NP_082213.2">
    <molecule id="Q6P9K8-1"/>
    <property type="nucleotide sequence ID" value="NM_027937.2"/>
</dbReference>
<dbReference type="RefSeq" id="XP_006524378.1">
    <property type="nucleotide sequence ID" value="XM_006524315.3"/>
</dbReference>
<dbReference type="SMR" id="Q6P9K8"/>
<dbReference type="BioGRID" id="234580">
    <property type="interactions" value="18"/>
</dbReference>
<dbReference type="FunCoup" id="Q6P9K8">
    <property type="interactions" value="686"/>
</dbReference>
<dbReference type="IntAct" id="Q6P9K8">
    <property type="interactions" value="9"/>
</dbReference>
<dbReference type="MINT" id="Q6P9K8"/>
<dbReference type="STRING" id="10090.ENSMUSP00000024958"/>
<dbReference type="GlyGen" id="Q6P9K8">
    <property type="glycosylation" value="7 sites, 1 O-linked glycan (2 sites)"/>
</dbReference>
<dbReference type="iPTMnet" id="Q6P9K8"/>
<dbReference type="PhosphoSitePlus" id="Q6P9K8"/>
<dbReference type="SwissPalm" id="Q6P9K8"/>
<dbReference type="PaxDb" id="10090-ENSMUSP00000024958"/>
<dbReference type="PeptideAtlas" id="Q6P9K8"/>
<dbReference type="ProteomicsDB" id="285318">
    <molecule id="Q6P9K8-1"/>
</dbReference>
<dbReference type="ProteomicsDB" id="285319">
    <molecule id="Q6P9K8-2"/>
</dbReference>
<dbReference type="ProteomicsDB" id="285320">
    <molecule id="Q6P9K8-3"/>
</dbReference>
<dbReference type="ProteomicsDB" id="285321">
    <molecule id="Q6P9K8-4"/>
</dbReference>
<dbReference type="Antibodypedia" id="61351">
    <property type="antibodies" value="25 antibodies from 14 providers"/>
</dbReference>
<dbReference type="DNASU" id="268932"/>
<dbReference type="Ensembl" id="ENSMUST00000024958.9">
    <molecule id="Q6P9K8-1"/>
    <property type="protein sequence ID" value="ENSMUSP00000024958.8"/>
    <property type="gene ID" value="ENSMUSG00000033597.10"/>
</dbReference>
<dbReference type="Ensembl" id="ENSMUST00000234717.2">
    <molecule id="Q6P9K8-2"/>
    <property type="protein sequence ID" value="ENSMUSP00000157196.2"/>
    <property type="gene ID" value="ENSMUSG00000033597.10"/>
</dbReference>
<dbReference type="GeneID" id="268932"/>
<dbReference type="KEGG" id="mmu:268932"/>
<dbReference type="UCSC" id="uc008awm.1">
    <molecule id="Q6P9K8-4"/>
    <property type="organism name" value="mouse"/>
</dbReference>
<dbReference type="UCSC" id="uc008awo.1">
    <molecule id="Q6P9K8-2"/>
    <property type="organism name" value="mouse"/>
</dbReference>
<dbReference type="UCSC" id="uc008awp.2">
    <molecule id="Q6P9K8-1"/>
    <property type="organism name" value="mouse"/>
</dbReference>
<dbReference type="AGR" id="MGI:2442952"/>
<dbReference type="CTD" id="57524"/>
<dbReference type="MGI" id="MGI:2442952">
    <property type="gene designation" value="Caskin1"/>
</dbReference>
<dbReference type="VEuPathDB" id="HostDB:ENSMUSG00000033597"/>
<dbReference type="eggNOG" id="KOG0507">
    <property type="taxonomic scope" value="Eukaryota"/>
</dbReference>
<dbReference type="GeneTree" id="ENSGT00940000158025"/>
<dbReference type="HOGENOM" id="CLU_003619_1_1_1"/>
<dbReference type="InParanoid" id="Q6P9K8"/>
<dbReference type="OMA" id="LFCLHGQ"/>
<dbReference type="OrthoDB" id="6156898at2759"/>
<dbReference type="PhylomeDB" id="Q6P9K8"/>
<dbReference type="TreeFam" id="TF320582"/>
<dbReference type="BioGRID-ORCS" id="268932">
    <property type="hits" value="5 hits in 79 CRISPR screens"/>
</dbReference>
<dbReference type="CD-CODE" id="CE726F99">
    <property type="entry name" value="Postsynaptic density"/>
</dbReference>
<dbReference type="ChiTaRS" id="Caskin1">
    <property type="organism name" value="mouse"/>
</dbReference>
<dbReference type="PRO" id="PR:Q6P9K8"/>
<dbReference type="Proteomes" id="UP000000589">
    <property type="component" value="Chromosome 17"/>
</dbReference>
<dbReference type="RNAct" id="Q6P9K8">
    <property type="molecule type" value="protein"/>
</dbReference>
<dbReference type="Bgee" id="ENSMUSG00000033597">
    <property type="expression patterns" value="Expressed in lumbar subsegment of spinal cord and 115 other cell types or tissues"/>
</dbReference>
<dbReference type="GO" id="GO:0005737">
    <property type="term" value="C:cytoplasm"/>
    <property type="evidence" value="ECO:0007669"/>
    <property type="project" value="UniProtKB-SubCell"/>
</dbReference>
<dbReference type="GO" id="GO:0098978">
    <property type="term" value="C:glutamatergic synapse"/>
    <property type="evidence" value="ECO:0000314"/>
    <property type="project" value="SynGO"/>
</dbReference>
<dbReference type="GO" id="GO:0098794">
    <property type="term" value="C:postsynapse"/>
    <property type="evidence" value="ECO:0000314"/>
    <property type="project" value="SynGO"/>
</dbReference>
<dbReference type="GO" id="GO:0042802">
    <property type="term" value="F:identical protein binding"/>
    <property type="evidence" value="ECO:0007669"/>
    <property type="project" value="Ensembl"/>
</dbReference>
<dbReference type="GO" id="GO:0099151">
    <property type="term" value="P:regulation of postsynaptic density assembly"/>
    <property type="evidence" value="ECO:0000314"/>
    <property type="project" value="SynGO"/>
</dbReference>
<dbReference type="CDD" id="cd09497">
    <property type="entry name" value="SAM_caskin1_2_repeat1"/>
    <property type="match status" value="1"/>
</dbReference>
<dbReference type="CDD" id="cd09498">
    <property type="entry name" value="SAM_caskin1_2_repeat2"/>
    <property type="match status" value="1"/>
</dbReference>
<dbReference type="CDD" id="cd12062">
    <property type="entry name" value="SH3_Caskin1"/>
    <property type="match status" value="1"/>
</dbReference>
<dbReference type="FunFam" id="1.10.150.50:FF:000032">
    <property type="entry name" value="caskin-1 isoform X1"/>
    <property type="match status" value="1"/>
</dbReference>
<dbReference type="FunFam" id="1.25.40.20:FF:000225">
    <property type="entry name" value="caskin-1 isoform X1"/>
    <property type="match status" value="1"/>
</dbReference>
<dbReference type="FunFam" id="2.30.30.40:FF:000062">
    <property type="entry name" value="caskin-2 isoform X1"/>
    <property type="match status" value="1"/>
</dbReference>
<dbReference type="FunFam" id="1.10.150.50:FF:000028">
    <property type="entry name" value="caskin-2 isoform X2"/>
    <property type="match status" value="1"/>
</dbReference>
<dbReference type="FunFam" id="1.25.40.20:FF:000042">
    <property type="entry name" value="caskin-2 isoform X2"/>
    <property type="match status" value="1"/>
</dbReference>
<dbReference type="Gene3D" id="1.25.40.20">
    <property type="entry name" value="Ankyrin repeat-containing domain"/>
    <property type="match status" value="2"/>
</dbReference>
<dbReference type="Gene3D" id="2.30.30.40">
    <property type="entry name" value="SH3 Domains"/>
    <property type="match status" value="1"/>
</dbReference>
<dbReference type="Gene3D" id="1.10.150.50">
    <property type="entry name" value="Transcription Factor, Ets-1"/>
    <property type="match status" value="2"/>
</dbReference>
<dbReference type="InterPro" id="IPR033635">
    <property type="entry name" value="ANKS1/Caskin"/>
</dbReference>
<dbReference type="InterPro" id="IPR002110">
    <property type="entry name" value="Ankyrin_rpt"/>
</dbReference>
<dbReference type="InterPro" id="IPR036770">
    <property type="entry name" value="Ankyrin_rpt-contain_sf"/>
</dbReference>
<dbReference type="InterPro" id="IPR032232">
    <property type="entry name" value="Caskin1-CID"/>
</dbReference>
<dbReference type="InterPro" id="IPR035497">
    <property type="entry name" value="Caskin1/2_SAM_1"/>
</dbReference>
<dbReference type="InterPro" id="IPR035498">
    <property type="entry name" value="Caskin1/2_SAM_2"/>
</dbReference>
<dbReference type="InterPro" id="IPR035495">
    <property type="entry name" value="Caskin1_SH3"/>
</dbReference>
<dbReference type="InterPro" id="IPR032117">
    <property type="entry name" value="Caskin_C"/>
</dbReference>
<dbReference type="InterPro" id="IPR001660">
    <property type="entry name" value="SAM"/>
</dbReference>
<dbReference type="InterPro" id="IPR013761">
    <property type="entry name" value="SAM/pointed_sf"/>
</dbReference>
<dbReference type="InterPro" id="IPR036028">
    <property type="entry name" value="SH3-like_dom_sf"/>
</dbReference>
<dbReference type="InterPro" id="IPR001452">
    <property type="entry name" value="SH3_domain"/>
</dbReference>
<dbReference type="PANTHER" id="PTHR24174">
    <property type="entry name" value="ANKYRIN REPEAT AND STERILE ALPHA MOTIF DOMAIN-CONTAINING PROTEIN 1"/>
    <property type="match status" value="1"/>
</dbReference>
<dbReference type="PANTHER" id="PTHR24174:SF11">
    <property type="entry name" value="CASKIN-1"/>
    <property type="match status" value="1"/>
</dbReference>
<dbReference type="Pfam" id="PF12796">
    <property type="entry name" value="Ank_2"/>
    <property type="match status" value="2"/>
</dbReference>
<dbReference type="Pfam" id="PF13637">
    <property type="entry name" value="Ank_4"/>
    <property type="match status" value="1"/>
</dbReference>
<dbReference type="Pfam" id="PF16907">
    <property type="entry name" value="Caskin-Pro-rich"/>
    <property type="match status" value="1"/>
</dbReference>
<dbReference type="Pfam" id="PF16632">
    <property type="entry name" value="Caskin-tail"/>
    <property type="match status" value="1"/>
</dbReference>
<dbReference type="Pfam" id="PF16600">
    <property type="entry name" value="Caskin1-CID"/>
    <property type="match status" value="1"/>
</dbReference>
<dbReference type="Pfam" id="PF00536">
    <property type="entry name" value="SAM_1"/>
    <property type="match status" value="2"/>
</dbReference>
<dbReference type="Pfam" id="PF07653">
    <property type="entry name" value="SH3_2"/>
    <property type="match status" value="1"/>
</dbReference>
<dbReference type="PRINTS" id="PR01415">
    <property type="entry name" value="ANKYRIN"/>
</dbReference>
<dbReference type="SMART" id="SM00248">
    <property type="entry name" value="ANK"/>
    <property type="match status" value="6"/>
</dbReference>
<dbReference type="SMART" id="SM00454">
    <property type="entry name" value="SAM"/>
    <property type="match status" value="2"/>
</dbReference>
<dbReference type="SMART" id="SM00326">
    <property type="entry name" value="SH3"/>
    <property type="match status" value="1"/>
</dbReference>
<dbReference type="SUPFAM" id="SSF48403">
    <property type="entry name" value="Ankyrin repeat"/>
    <property type="match status" value="1"/>
</dbReference>
<dbReference type="SUPFAM" id="SSF47769">
    <property type="entry name" value="SAM/Pointed domain"/>
    <property type="match status" value="2"/>
</dbReference>
<dbReference type="SUPFAM" id="SSF50044">
    <property type="entry name" value="SH3-domain"/>
    <property type="match status" value="1"/>
</dbReference>
<dbReference type="PROSITE" id="PS50297">
    <property type="entry name" value="ANK_REP_REGION"/>
    <property type="match status" value="1"/>
</dbReference>
<dbReference type="PROSITE" id="PS50088">
    <property type="entry name" value="ANK_REPEAT"/>
    <property type="match status" value="6"/>
</dbReference>
<dbReference type="PROSITE" id="PS50105">
    <property type="entry name" value="SAM_DOMAIN"/>
    <property type="match status" value="2"/>
</dbReference>
<dbReference type="PROSITE" id="PS50002">
    <property type="entry name" value="SH3"/>
    <property type="match status" value="1"/>
</dbReference>
<name>CSKI1_MOUSE</name>
<feature type="chain" id="PRO_0000066981" description="Caskin-1">
    <location>
        <begin position="1"/>
        <end position="1431"/>
    </location>
</feature>
<feature type="repeat" description="ANK 1">
    <location>
        <begin position="48"/>
        <end position="77"/>
    </location>
</feature>
<feature type="repeat" description="ANK 2">
    <location>
        <begin position="81"/>
        <end position="110"/>
    </location>
</feature>
<feature type="repeat" description="ANK 3">
    <location>
        <begin position="114"/>
        <end position="143"/>
    </location>
</feature>
<feature type="repeat" description="ANK 4">
    <location>
        <begin position="147"/>
        <end position="176"/>
    </location>
</feature>
<feature type="repeat" description="ANK 5">
    <location>
        <begin position="188"/>
        <end position="217"/>
    </location>
</feature>
<feature type="repeat" description="ANK 6">
    <location>
        <begin position="220"/>
        <end position="249"/>
    </location>
</feature>
<feature type="domain" description="SH3" evidence="5">
    <location>
        <begin position="281"/>
        <end position="347"/>
    </location>
</feature>
<feature type="domain" description="SAM 1" evidence="4">
    <location>
        <begin position="476"/>
        <end position="539"/>
    </location>
</feature>
<feature type="domain" description="SAM 2" evidence="4">
    <location>
        <begin position="545"/>
        <end position="609"/>
    </location>
</feature>
<feature type="region of interest" description="Disordered" evidence="6">
    <location>
        <begin position="348"/>
        <end position="372"/>
    </location>
</feature>
<feature type="region of interest" description="CASK-binding" evidence="1">
    <location>
        <begin position="375"/>
        <end position="471"/>
    </location>
</feature>
<feature type="region of interest" description="Disordered" evidence="6">
    <location>
        <begin position="420"/>
        <end position="471"/>
    </location>
</feature>
<feature type="region of interest" description="Disordered" evidence="6">
    <location>
        <begin position="669"/>
        <end position="1000"/>
    </location>
</feature>
<feature type="region of interest" description="Disordered" evidence="6">
    <location>
        <begin position="1016"/>
        <end position="1041"/>
    </location>
</feature>
<feature type="region of interest" description="Disordered" evidence="6">
    <location>
        <begin position="1072"/>
        <end position="1372"/>
    </location>
</feature>
<feature type="region of interest" description="Disordered" evidence="6">
    <location>
        <begin position="1389"/>
        <end position="1410"/>
    </location>
</feature>
<feature type="compositionally biased region" description="Polar residues" evidence="6">
    <location>
        <begin position="420"/>
        <end position="430"/>
    </location>
</feature>
<feature type="compositionally biased region" description="Low complexity" evidence="6">
    <location>
        <begin position="669"/>
        <end position="679"/>
    </location>
</feature>
<feature type="compositionally biased region" description="Polar residues" evidence="6">
    <location>
        <begin position="692"/>
        <end position="712"/>
    </location>
</feature>
<feature type="compositionally biased region" description="Pro residues" evidence="6">
    <location>
        <begin position="848"/>
        <end position="860"/>
    </location>
</feature>
<feature type="compositionally biased region" description="Pro residues" evidence="6">
    <location>
        <begin position="1028"/>
        <end position="1037"/>
    </location>
</feature>
<feature type="compositionally biased region" description="Basic and acidic residues" evidence="6">
    <location>
        <begin position="1148"/>
        <end position="1160"/>
    </location>
</feature>
<feature type="compositionally biased region" description="Pro residues" evidence="6">
    <location>
        <begin position="1191"/>
        <end position="1215"/>
    </location>
</feature>
<feature type="compositionally biased region" description="Polar residues" evidence="6">
    <location>
        <begin position="1236"/>
        <end position="1247"/>
    </location>
</feature>
<feature type="compositionally biased region" description="Pro residues" evidence="6">
    <location>
        <begin position="1268"/>
        <end position="1283"/>
    </location>
</feature>
<feature type="compositionally biased region" description="Low complexity" evidence="6">
    <location>
        <begin position="1284"/>
        <end position="1299"/>
    </location>
</feature>
<feature type="compositionally biased region" description="Low complexity" evidence="6">
    <location>
        <begin position="1309"/>
        <end position="1327"/>
    </location>
</feature>
<feature type="compositionally biased region" description="Low complexity" evidence="6">
    <location>
        <begin position="1345"/>
        <end position="1359"/>
    </location>
</feature>
<feature type="compositionally biased region" description="Basic and acidic residues" evidence="6">
    <location>
        <begin position="1389"/>
        <end position="1407"/>
    </location>
</feature>
<feature type="modified residue" description="Phosphotyrosine" evidence="12">
    <location>
        <position position="253"/>
    </location>
</feature>
<feature type="modified residue" description="Phosphoserine" evidence="13">
    <location>
        <position position="358"/>
    </location>
</feature>
<feature type="modified residue" description="Omega-N-methylarginine" evidence="3">
    <location>
        <position position="398"/>
    </location>
</feature>
<feature type="modified residue" description="Phosphoserine" evidence="13">
    <location>
        <position position="423"/>
    </location>
</feature>
<feature type="modified residue" description="Phosphoserine" evidence="13">
    <location>
        <position position="432"/>
    </location>
</feature>
<feature type="modified residue" description="Phosphoserine" evidence="13">
    <location>
        <position position="637"/>
    </location>
</feature>
<feature type="modified residue" description="Phosphoserine" evidence="13">
    <location>
        <position position="650"/>
    </location>
</feature>
<feature type="modified residue" description="Phosphoserine" evidence="2">
    <location>
        <position position="723"/>
    </location>
</feature>
<feature type="modified residue" description="Phosphoserine" evidence="13">
    <location>
        <position position="728"/>
    </location>
</feature>
<feature type="modified residue" description="Phosphothreonine" evidence="2">
    <location>
        <position position="741"/>
    </location>
</feature>
<feature type="modified residue" description="Phosphoserine" evidence="3">
    <location>
        <position position="791"/>
    </location>
</feature>
<feature type="modified residue" description="Phosphoserine" evidence="2">
    <location>
        <position position="891"/>
    </location>
</feature>
<feature type="modified residue" description="Phosphoserine" evidence="2">
    <location>
        <position position="893"/>
    </location>
</feature>
<feature type="modified residue" description="Phosphoserine" evidence="13">
    <location>
        <position position="989"/>
    </location>
</feature>
<feature type="modified residue" description="Phosphothreonine" evidence="13">
    <location>
        <position position="1067"/>
    </location>
</feature>
<feature type="modified residue" description="Phosphoserine" evidence="13">
    <location>
        <position position="1069"/>
    </location>
</feature>
<feature type="modified residue" description="Phosphoserine" evidence="11 13">
    <location>
        <position position="1259"/>
    </location>
</feature>
<feature type="modified residue" description="Phosphothreonine" evidence="13">
    <location>
        <position position="1268"/>
    </location>
</feature>
<feature type="modified residue" description="Phosphoserine" evidence="11 13">
    <location>
        <position position="1363"/>
    </location>
</feature>
<feature type="splice variant" id="VSP_013121" description="In isoform 4." evidence="9">
    <original>SRTGSEPSPPQGGGS</original>
    <variation>KSTPLWREASRGHSA</variation>
    <location>
        <begin position="351"/>
        <end position="365"/>
    </location>
</feature>
<feature type="splice variant" id="VSP_013122" description="In isoform 4." evidence="9">
    <location>
        <begin position="366"/>
        <end position="1431"/>
    </location>
</feature>
<feature type="splice variant" id="VSP_013123" description="In isoform 2." evidence="7">
    <location>
        <begin position="477"/>
        <end position="547"/>
    </location>
</feature>
<feature type="splice variant" id="VSP_013124" description="In isoform 3." evidence="8">
    <location>
        <begin position="1284"/>
        <end position="1342"/>
    </location>
</feature>
<feature type="sequence conflict" description="In Ref. 1; BAB29308." evidence="10" ref="1">
    <original>K</original>
    <variation>E</variation>
    <location>
        <position position="274"/>
    </location>
</feature>
<feature type="sequence conflict" description="In Ref. 1; BAC34019." evidence="10" ref="1">
    <original>A</original>
    <variation>S</variation>
    <location>
        <position position="969"/>
    </location>
</feature>
<feature type="sequence conflict" description="In Ref. 3; BAC98137." evidence="10" ref="3">
    <original>S</original>
    <variation>A</variation>
    <location>
        <position position="1235"/>
    </location>
</feature>
<proteinExistence type="evidence at protein level"/>
<comment type="function">
    <text evidence="1">May link the scaffolding protein CASK to downstream intracellular effectors.</text>
</comment>
<comment type="subunit">
    <text evidence="1">Binds the CaM kinase domain of CASK. Forms a ternary complex with CASK and LIN7A, LIN7B or LIN7C. Competes with APBA1 that forms a similar complex with CASK and LIN7 proteins. The tripartite complex CASKIN1/CASK/LIN7(A/B/C) binds the cytoplasmic tail of NRXN1. Polymerizes, via the tandem SAM domains, to form long, 8 nM wide fibers, upon which other proteins can assemble (By similarity).</text>
</comment>
<comment type="interaction">
    <interactant intactId="EBI-771526">
        <id>Q6P9K8</id>
    </interactant>
    <interactant intactId="EBI-770338">
        <id>Q80Z38</id>
        <label>Shank2</label>
    </interactant>
    <organismsDiffer>false</organismsDiffer>
    <experiments>2</experiments>
</comment>
<comment type="subcellular location">
    <subcellularLocation>
        <location evidence="1">Cytoplasm</location>
    </subcellularLocation>
</comment>
<comment type="alternative products">
    <event type="alternative splicing"/>
    <isoform>
        <id>Q6P9K8-1</id>
        <name>1</name>
        <sequence type="displayed"/>
    </isoform>
    <isoform>
        <id>Q6P9K8-2</id>
        <name>2</name>
        <sequence type="described" ref="VSP_013123"/>
    </isoform>
    <isoform>
        <id>Q6P9K8-3</id>
        <name>3</name>
        <sequence type="described" ref="VSP_013124"/>
    </isoform>
    <isoform>
        <id>Q6P9K8-4</id>
        <name>4</name>
        <sequence type="described" ref="VSP_013121 VSP_013122"/>
    </isoform>
</comment>
<gene>
    <name type="primary">Caskin1</name>
    <name type="synonym">Kiaa1306</name>
</gene>
<keyword id="KW-0025">Alternative splicing</keyword>
<keyword id="KW-0040">ANK repeat</keyword>
<keyword id="KW-0963">Cytoplasm</keyword>
<keyword id="KW-0488">Methylation</keyword>
<keyword id="KW-0597">Phosphoprotein</keyword>
<keyword id="KW-1185">Reference proteome</keyword>
<keyword id="KW-0677">Repeat</keyword>
<keyword id="KW-0728">SH3 domain</keyword>
<reference key="1">
    <citation type="journal article" date="2005" name="Science">
        <title>The transcriptional landscape of the mammalian genome.</title>
        <authorList>
            <person name="Carninci P."/>
            <person name="Kasukawa T."/>
            <person name="Katayama S."/>
            <person name="Gough J."/>
            <person name="Frith M.C."/>
            <person name="Maeda N."/>
            <person name="Oyama R."/>
            <person name="Ravasi T."/>
            <person name="Lenhard B."/>
            <person name="Wells C."/>
            <person name="Kodzius R."/>
            <person name="Shimokawa K."/>
            <person name="Bajic V.B."/>
            <person name="Brenner S.E."/>
            <person name="Batalov S."/>
            <person name="Forrest A.R."/>
            <person name="Zavolan M."/>
            <person name="Davis M.J."/>
            <person name="Wilming L.G."/>
            <person name="Aidinis V."/>
            <person name="Allen J.E."/>
            <person name="Ambesi-Impiombato A."/>
            <person name="Apweiler R."/>
            <person name="Aturaliya R.N."/>
            <person name="Bailey T.L."/>
            <person name="Bansal M."/>
            <person name="Baxter L."/>
            <person name="Beisel K.W."/>
            <person name="Bersano T."/>
            <person name="Bono H."/>
            <person name="Chalk A.M."/>
            <person name="Chiu K.P."/>
            <person name="Choudhary V."/>
            <person name="Christoffels A."/>
            <person name="Clutterbuck D.R."/>
            <person name="Crowe M.L."/>
            <person name="Dalla E."/>
            <person name="Dalrymple B.P."/>
            <person name="de Bono B."/>
            <person name="Della Gatta G."/>
            <person name="di Bernardo D."/>
            <person name="Down T."/>
            <person name="Engstrom P."/>
            <person name="Fagiolini M."/>
            <person name="Faulkner G."/>
            <person name="Fletcher C.F."/>
            <person name="Fukushima T."/>
            <person name="Furuno M."/>
            <person name="Futaki S."/>
            <person name="Gariboldi M."/>
            <person name="Georgii-Hemming P."/>
            <person name="Gingeras T.R."/>
            <person name="Gojobori T."/>
            <person name="Green R.E."/>
            <person name="Gustincich S."/>
            <person name="Harbers M."/>
            <person name="Hayashi Y."/>
            <person name="Hensch T.K."/>
            <person name="Hirokawa N."/>
            <person name="Hill D."/>
            <person name="Huminiecki L."/>
            <person name="Iacono M."/>
            <person name="Ikeo K."/>
            <person name="Iwama A."/>
            <person name="Ishikawa T."/>
            <person name="Jakt M."/>
            <person name="Kanapin A."/>
            <person name="Katoh M."/>
            <person name="Kawasawa Y."/>
            <person name="Kelso J."/>
            <person name="Kitamura H."/>
            <person name="Kitano H."/>
            <person name="Kollias G."/>
            <person name="Krishnan S.P."/>
            <person name="Kruger A."/>
            <person name="Kummerfeld S.K."/>
            <person name="Kurochkin I.V."/>
            <person name="Lareau L.F."/>
            <person name="Lazarevic D."/>
            <person name="Lipovich L."/>
            <person name="Liu J."/>
            <person name="Liuni S."/>
            <person name="McWilliam S."/>
            <person name="Madan Babu M."/>
            <person name="Madera M."/>
            <person name="Marchionni L."/>
            <person name="Matsuda H."/>
            <person name="Matsuzawa S."/>
            <person name="Miki H."/>
            <person name="Mignone F."/>
            <person name="Miyake S."/>
            <person name="Morris K."/>
            <person name="Mottagui-Tabar S."/>
            <person name="Mulder N."/>
            <person name="Nakano N."/>
            <person name="Nakauchi H."/>
            <person name="Ng P."/>
            <person name="Nilsson R."/>
            <person name="Nishiguchi S."/>
            <person name="Nishikawa S."/>
            <person name="Nori F."/>
            <person name="Ohara O."/>
            <person name="Okazaki Y."/>
            <person name="Orlando V."/>
            <person name="Pang K.C."/>
            <person name="Pavan W.J."/>
            <person name="Pavesi G."/>
            <person name="Pesole G."/>
            <person name="Petrovsky N."/>
            <person name="Piazza S."/>
            <person name="Reed J."/>
            <person name="Reid J.F."/>
            <person name="Ring B.Z."/>
            <person name="Ringwald M."/>
            <person name="Rost B."/>
            <person name="Ruan Y."/>
            <person name="Salzberg S.L."/>
            <person name="Sandelin A."/>
            <person name="Schneider C."/>
            <person name="Schoenbach C."/>
            <person name="Sekiguchi K."/>
            <person name="Semple C.A."/>
            <person name="Seno S."/>
            <person name="Sessa L."/>
            <person name="Sheng Y."/>
            <person name="Shibata Y."/>
            <person name="Shimada H."/>
            <person name="Shimada K."/>
            <person name="Silva D."/>
            <person name="Sinclair B."/>
            <person name="Sperling S."/>
            <person name="Stupka E."/>
            <person name="Sugiura K."/>
            <person name="Sultana R."/>
            <person name="Takenaka Y."/>
            <person name="Taki K."/>
            <person name="Tammoja K."/>
            <person name="Tan S.L."/>
            <person name="Tang S."/>
            <person name="Taylor M.S."/>
            <person name="Tegner J."/>
            <person name="Teichmann S.A."/>
            <person name="Ueda H.R."/>
            <person name="van Nimwegen E."/>
            <person name="Verardo R."/>
            <person name="Wei C.L."/>
            <person name="Yagi K."/>
            <person name="Yamanishi H."/>
            <person name="Zabarovsky E."/>
            <person name="Zhu S."/>
            <person name="Zimmer A."/>
            <person name="Hide W."/>
            <person name="Bult C."/>
            <person name="Grimmond S.M."/>
            <person name="Teasdale R.D."/>
            <person name="Liu E.T."/>
            <person name="Brusic V."/>
            <person name="Quackenbush J."/>
            <person name="Wahlestedt C."/>
            <person name="Mattick J.S."/>
            <person name="Hume D.A."/>
            <person name="Kai C."/>
            <person name="Sasaki D."/>
            <person name="Tomaru Y."/>
            <person name="Fukuda S."/>
            <person name="Kanamori-Katayama M."/>
            <person name="Suzuki M."/>
            <person name="Aoki J."/>
            <person name="Arakawa T."/>
            <person name="Iida J."/>
            <person name="Imamura K."/>
            <person name="Itoh M."/>
            <person name="Kato T."/>
            <person name="Kawaji H."/>
            <person name="Kawagashira N."/>
            <person name="Kawashima T."/>
            <person name="Kojima M."/>
            <person name="Kondo S."/>
            <person name="Konno H."/>
            <person name="Nakano K."/>
            <person name="Ninomiya N."/>
            <person name="Nishio T."/>
            <person name="Okada M."/>
            <person name="Plessy C."/>
            <person name="Shibata K."/>
            <person name="Shiraki T."/>
            <person name="Suzuki S."/>
            <person name="Tagami M."/>
            <person name="Waki K."/>
            <person name="Watahiki A."/>
            <person name="Okamura-Oho Y."/>
            <person name="Suzuki H."/>
            <person name="Kawai J."/>
            <person name="Hayashizaki Y."/>
        </authorList>
    </citation>
    <scope>NUCLEOTIDE SEQUENCE [LARGE SCALE MRNA] (ISOFORM 4)</scope>
    <scope>NUCLEOTIDE SEQUENCE [LARGE SCALE MRNA] OF 667-1431 (ISOFORMS 1/2)</scope>
    <source>
        <strain>C57BL/6J</strain>
        <tissue>Head</tissue>
        <tissue>Hippocampus</tissue>
    </source>
</reference>
<reference key="2">
    <citation type="journal article" date="2003" name="DNA Res.">
        <title>Prediction of the coding sequences of mouse homologues of KIAA gene: III. The complete nucleotide sequences of 500 mouse KIAA-homologous cDNAs identified by screening of terminal sequences of cDNA clones randomly sampled from size-fractionated libraries.</title>
        <authorList>
            <person name="Okazaki N."/>
            <person name="Kikuno R."/>
            <person name="Ohara R."/>
            <person name="Inamoto S."/>
            <person name="Koseki H."/>
            <person name="Hiraoka S."/>
            <person name="Saga Y."/>
            <person name="Nagase T."/>
            <person name="Ohara O."/>
            <person name="Koga H."/>
        </authorList>
    </citation>
    <scope>NUCLEOTIDE SEQUENCE [LARGE SCALE MRNA] OF 14-1431 (ISOFORM 2)</scope>
    <source>
        <tissue>Brain</tissue>
    </source>
</reference>
<reference key="3">
    <citation type="journal article" date="2004" name="Genome Res.">
        <title>The status, quality, and expansion of the NIH full-length cDNA project: the Mammalian Gene Collection (MGC).</title>
        <authorList>
            <consortium name="The MGC Project Team"/>
        </authorList>
    </citation>
    <scope>NUCLEOTIDE SEQUENCE [LARGE SCALE MRNA] OF 18-1431 (ISOFORM 3)</scope>
    <source>
        <strain>C57BL/6J</strain>
        <tissue>Brain</tissue>
    </source>
</reference>
<reference key="4">
    <citation type="journal article" date="2006" name="Mol. Cell. Proteomics">
        <title>Comprehensive identification of phosphorylation sites in postsynaptic density preparations.</title>
        <authorList>
            <person name="Trinidad J.C."/>
            <person name="Specht C.G."/>
            <person name="Thalhammer A."/>
            <person name="Schoepfer R."/>
            <person name="Burlingame A.L."/>
        </authorList>
    </citation>
    <scope>PHOSPHORYLATION [LARGE SCALE ANALYSIS] AT SER-1259 AND SER-1363</scope>
    <scope>IDENTIFICATION BY MASS SPECTROMETRY [LARGE SCALE ANALYSIS]</scope>
    <source>
        <tissue>Brain</tissue>
    </source>
</reference>
<reference key="5">
    <citation type="journal article" date="2007" name="Mol. Cell. Proteomics">
        <title>Qualitative and quantitative analyses of protein phosphorylation in naive and stimulated mouse synaptosomal preparations.</title>
        <authorList>
            <person name="Munton R.P."/>
            <person name="Tweedie-Cullen R."/>
            <person name="Livingstone-Zatchej M."/>
            <person name="Weinandy F."/>
            <person name="Waidelich M."/>
            <person name="Longo D."/>
            <person name="Gehrig P."/>
            <person name="Potthast F."/>
            <person name="Rutishauser D."/>
            <person name="Gerrits B."/>
            <person name="Panse C."/>
            <person name="Schlapbach R."/>
            <person name="Mansuy I.M."/>
        </authorList>
    </citation>
    <scope>IDENTIFICATION BY MASS SPECTROMETRY [LARGE SCALE ANALYSIS]</scope>
    <source>
        <tissue>Brain cortex</tissue>
    </source>
</reference>
<reference key="6">
    <citation type="journal article" date="2008" name="J. Proteome Res.">
        <title>Large-scale identification and evolution indexing of tyrosine phosphorylation sites from murine brain.</title>
        <authorList>
            <person name="Ballif B.A."/>
            <person name="Carey G.R."/>
            <person name="Sunyaev S.R."/>
            <person name="Gygi S.P."/>
        </authorList>
    </citation>
    <scope>PHOSPHORYLATION [LARGE SCALE ANALYSIS] AT TYR-253</scope>
    <scope>IDENTIFICATION BY MASS SPECTROMETRY [LARGE SCALE ANALYSIS]</scope>
    <source>
        <tissue>Brain</tissue>
    </source>
</reference>
<reference key="7">
    <citation type="journal article" date="2010" name="Cell">
        <title>A tissue-specific atlas of mouse protein phosphorylation and expression.</title>
        <authorList>
            <person name="Huttlin E.L."/>
            <person name="Jedrychowski M.P."/>
            <person name="Elias J.E."/>
            <person name="Goswami T."/>
            <person name="Rad R."/>
            <person name="Beausoleil S.A."/>
            <person name="Villen J."/>
            <person name="Haas W."/>
            <person name="Sowa M.E."/>
            <person name="Gygi S.P."/>
        </authorList>
    </citation>
    <scope>PHOSPHORYLATION [LARGE SCALE ANALYSIS] AT SER-358; SER-423; SER-432; SER-637; SER-650; SER-728; SER-989; THR-1067; SER-1069; SER-1259; THR-1268 AND SER-1363</scope>
    <scope>IDENTIFICATION BY MASS SPECTROMETRY [LARGE SCALE ANALYSIS]</scope>
    <source>
        <tissue>Brain</tissue>
        <tissue>Testis</tissue>
    </source>
</reference>
<accession>Q6P9K8</accession>
<accession>Q6ZPU2</accession>
<accession>Q8BWU2</accession>
<accession>Q8BX99</accession>
<accession>Q9CXH0</accession>
<organism>
    <name type="scientific">Mus musculus</name>
    <name type="common">Mouse</name>
    <dbReference type="NCBI Taxonomy" id="10090"/>
    <lineage>
        <taxon>Eukaryota</taxon>
        <taxon>Metazoa</taxon>
        <taxon>Chordata</taxon>
        <taxon>Craniata</taxon>
        <taxon>Vertebrata</taxon>
        <taxon>Euteleostomi</taxon>
        <taxon>Mammalia</taxon>
        <taxon>Eutheria</taxon>
        <taxon>Euarchontoglires</taxon>
        <taxon>Glires</taxon>
        <taxon>Rodentia</taxon>
        <taxon>Myomorpha</taxon>
        <taxon>Muroidea</taxon>
        <taxon>Muridae</taxon>
        <taxon>Murinae</taxon>
        <taxon>Mus</taxon>
        <taxon>Mus</taxon>
    </lineage>
</organism>
<protein>
    <recommendedName>
        <fullName>Caskin-1</fullName>
    </recommendedName>
    <alternativeName>
        <fullName>CASK-interacting protein 1</fullName>
    </alternativeName>
</protein>